<sequence length="947" mass="107813">MADSDDEYDRKRRDKFRGERDSYRTERRDDRRPVGGSAGARDEWAERNPFRGAASAGGGGARHRPDYSDYRGPGARPRYGSPGRDLPPAKRMRPDWGDGDVRANPRFGGYDPYLMQAWNDHYQSMHSAYSHAGHAPPVRESIGGGGSDTLTQPAMLNLKQFLDTQDENISDSEVMRKYTEYKTDFKRQQLNEFFVAHKDEEWFKNKYHPEDSVKRSEEQRGFLQRRTDVFMELFENGTIGSVKVDSSQADALIRVLDTCVIKLEGGTDEDLKVLDEKPKDPVVYERKAEPMQSVKAVEKTINSPKDEITEADPLPVVVSTQRKPVGPVNSDEENWDDDNDAENSAPKKELAEDSKDSDSKPEDKQLNKKKTKKRKRNSSDDDSSSSESSSSSDEEKLKEKYDVEDGLRTEQKIEAEKDRQEATKAKQEPQSPKLDEVEGNDTTEPKGLDSKINTVEIDDTLKSPEISSNPIKNTDNGDSSKVEEDEEKPSVGKDNVVETETIDLDKVKDCQPRALHRTSSIFLRNLAPSITRSEIEAVCNRFNGYLRVAIADPLVERRWYRRGWITFMRDVNIKEICWGLNNQRLRDCEMGAIVNRDLSRRVRPANGITAHKQVVRSDIKLCAKIALNLDEKFRLWAEVPKDDSNSARANESSENGSGSTYGFNSQNPVLQNITDYLIEEASAEEEELLGLTGENKDTEGEPIERDEQLISVLDRLVLYLRIVHSVDYYNHCEYPYEDEMPNRCGIIHARGPPPVRVTNNDVQEYIKMYETKLQQFLTKTVPLSDEEIKNLGAKDAETEVEKFVQANTQELAKDKWLCPLSGKKFKGPEFIRKHIFNKHEEKVDEVRKEVQYFNNYLRDPKRPQLPEHPGTSKRPESESARGGGGGYRPPMYPPFSAMPYGFGPPMRGGGRAGRNFPPARRELPLEHQRRLIGYHDLDAPANSDMFD</sequence>
<accession>B4QCR6</accession>
<organism>
    <name type="scientific">Drosophila simulans</name>
    <name type="common">Fruit fly</name>
    <dbReference type="NCBI Taxonomy" id="7240"/>
    <lineage>
        <taxon>Eukaryota</taxon>
        <taxon>Metazoa</taxon>
        <taxon>Ecdysozoa</taxon>
        <taxon>Arthropoda</taxon>
        <taxon>Hexapoda</taxon>
        <taxon>Insecta</taxon>
        <taxon>Pterygota</taxon>
        <taxon>Neoptera</taxon>
        <taxon>Endopterygota</taxon>
        <taxon>Diptera</taxon>
        <taxon>Brachycera</taxon>
        <taxon>Muscomorpha</taxon>
        <taxon>Ephydroidea</taxon>
        <taxon>Drosophilidae</taxon>
        <taxon>Drosophila</taxon>
        <taxon>Sophophora</taxon>
    </lineage>
</organism>
<keyword id="KW-0539">Nucleus</keyword>
<keyword id="KW-0597">Phosphoprotein</keyword>
<keyword id="KW-1185">Reference proteome</keyword>
<keyword id="KW-0943">RNA-mediated gene silencing</keyword>
<feature type="chain" id="PRO_0000385223" description="Serrate RNA effector molecule homolog">
    <location>
        <begin position="1"/>
        <end position="947"/>
    </location>
</feature>
<feature type="region of interest" description="Disordered" evidence="2">
    <location>
        <begin position="1"/>
        <end position="100"/>
    </location>
</feature>
<feature type="region of interest" description="Disordered" evidence="2">
    <location>
        <begin position="300"/>
        <end position="492"/>
    </location>
</feature>
<feature type="region of interest" description="Disordered" evidence="2">
    <location>
        <begin position="643"/>
        <end position="666"/>
    </location>
</feature>
<feature type="region of interest" description="Disordered" evidence="2">
    <location>
        <begin position="855"/>
        <end position="892"/>
    </location>
</feature>
<feature type="compositionally biased region" description="Basic and acidic residues" evidence="2">
    <location>
        <begin position="8"/>
        <end position="33"/>
    </location>
</feature>
<feature type="compositionally biased region" description="Basic and acidic residues" evidence="2">
    <location>
        <begin position="40"/>
        <end position="49"/>
    </location>
</feature>
<feature type="compositionally biased region" description="Acidic residues" evidence="2">
    <location>
        <begin position="330"/>
        <end position="341"/>
    </location>
</feature>
<feature type="compositionally biased region" description="Basic and acidic residues" evidence="2">
    <location>
        <begin position="345"/>
        <end position="366"/>
    </location>
</feature>
<feature type="compositionally biased region" description="Basic residues" evidence="2">
    <location>
        <begin position="367"/>
        <end position="376"/>
    </location>
</feature>
<feature type="compositionally biased region" description="Basic and acidic residues" evidence="2">
    <location>
        <begin position="393"/>
        <end position="427"/>
    </location>
</feature>
<feature type="compositionally biased region" description="Polar residues" evidence="2">
    <location>
        <begin position="465"/>
        <end position="479"/>
    </location>
</feature>
<feature type="compositionally biased region" description="Low complexity" evidence="2">
    <location>
        <begin position="646"/>
        <end position="657"/>
    </location>
</feature>
<feature type="modified residue" description="Phosphotyrosine" evidence="1">
    <location>
        <position position="79"/>
    </location>
</feature>
<feature type="modified residue" description="Phosphoserine" evidence="1">
    <location>
        <position position="81"/>
    </location>
</feature>
<feature type="modified residue" description="Phosphothreonine" evidence="1">
    <location>
        <position position="300"/>
    </location>
</feature>
<feature type="modified residue" description="Phosphoserine" evidence="1">
    <location>
        <position position="303"/>
    </location>
</feature>
<feature type="modified residue" description="Phosphoserine" evidence="1">
    <location>
        <position position="330"/>
    </location>
</feature>
<feature type="modified residue" description="Phosphoserine" evidence="1">
    <location>
        <position position="354"/>
    </location>
</feature>
<feature type="modified residue" description="Phosphoserine" evidence="1">
    <location>
        <position position="357"/>
    </location>
</feature>
<feature type="modified residue" description="Phosphoserine" evidence="1">
    <location>
        <position position="431"/>
    </location>
</feature>
<feature type="modified residue" description="Phosphoserine" evidence="1">
    <location>
        <position position="644"/>
    </location>
</feature>
<feature type="modified residue" description="Phosphoserine" evidence="1">
    <location>
        <position position="646"/>
    </location>
</feature>
<protein>
    <recommendedName>
        <fullName>Serrate RNA effector molecule homolog</fullName>
    </recommendedName>
    <alternativeName>
        <fullName>Arsenite-resistance protein 2 homolog</fullName>
    </alternativeName>
</protein>
<name>SRRT_DROSI</name>
<dbReference type="EMBL" id="CM000362">
    <property type="protein sequence ID" value="EDX05855.1"/>
    <property type="molecule type" value="Genomic_DNA"/>
</dbReference>
<dbReference type="SMR" id="B4QCR6"/>
<dbReference type="STRING" id="7240.B4QCR6"/>
<dbReference type="HOGENOM" id="CLU_008560_0_0_1"/>
<dbReference type="OMA" id="GARDEWS"/>
<dbReference type="OrthoDB" id="342064at2759"/>
<dbReference type="PhylomeDB" id="B4QCR6"/>
<dbReference type="Proteomes" id="UP000000304">
    <property type="component" value="Chromosome 2R"/>
</dbReference>
<dbReference type="GO" id="GO:0016604">
    <property type="term" value="C:nuclear body"/>
    <property type="evidence" value="ECO:0007669"/>
    <property type="project" value="TreeGrafter"/>
</dbReference>
<dbReference type="GO" id="GO:0005654">
    <property type="term" value="C:nucleoplasm"/>
    <property type="evidence" value="ECO:0000250"/>
    <property type="project" value="UniProtKB"/>
</dbReference>
<dbReference type="GO" id="GO:0031053">
    <property type="term" value="P:primary miRNA processing"/>
    <property type="evidence" value="ECO:0000250"/>
    <property type="project" value="UniProtKB"/>
</dbReference>
<dbReference type="GO" id="GO:0035194">
    <property type="term" value="P:regulatory ncRNA-mediated post-transcriptional gene silencing"/>
    <property type="evidence" value="ECO:0000250"/>
    <property type="project" value="UniProtKB"/>
</dbReference>
<dbReference type="InterPro" id="IPR039727">
    <property type="entry name" value="SE/Ars2"/>
</dbReference>
<dbReference type="InterPro" id="IPR007042">
    <property type="entry name" value="SERRATE/Ars2_C"/>
</dbReference>
<dbReference type="InterPro" id="IPR021933">
    <property type="entry name" value="SERRATE/Ars2_N"/>
</dbReference>
<dbReference type="PANTHER" id="PTHR13165">
    <property type="entry name" value="ARSENITE-RESISTANCE PROTEIN 2"/>
    <property type="match status" value="1"/>
</dbReference>
<dbReference type="PANTHER" id="PTHR13165:SF0">
    <property type="entry name" value="SERRATE RNA EFFECTOR MOLECULE HOMOLOG"/>
    <property type="match status" value="1"/>
</dbReference>
<dbReference type="Pfam" id="PF04959">
    <property type="entry name" value="ARS2"/>
    <property type="match status" value="1"/>
</dbReference>
<dbReference type="Pfam" id="PF12066">
    <property type="entry name" value="SERRATE_Ars2_N"/>
    <property type="match status" value="1"/>
</dbReference>
<evidence type="ECO:0000250" key="1"/>
<evidence type="ECO:0000256" key="2">
    <source>
        <dbReference type="SAM" id="MobiDB-lite"/>
    </source>
</evidence>
<evidence type="ECO:0000305" key="3"/>
<comment type="function">
    <text evidence="1">Acts as a mediator between the cap-binding complex (CBC) and RNA-mediated gene silencing (RNAi). Involved in innate immunity via the short interfering RNAs (siRNAs) processing machinery by restricting the viral RNA production. Also involved microRNA (miRNA)-mediated silencing by contributing to the stability and delivery of primary miRNA transcripts to the primary miRNA processing complex containing drosha and pasha (By similarity).</text>
</comment>
<comment type="subunit">
    <text evidence="1">Interacts with cbp20, Dcr-2 and pasha.</text>
</comment>
<comment type="subcellular location">
    <subcellularLocation>
        <location evidence="1">Nucleus</location>
    </subcellularLocation>
</comment>
<comment type="similarity">
    <text evidence="3">Belongs to the ARS2 family.</text>
</comment>
<reference key="1">
    <citation type="journal article" date="2007" name="Nature">
        <title>Evolution of genes and genomes on the Drosophila phylogeny.</title>
        <authorList>
            <consortium name="Drosophila 12 genomes consortium"/>
        </authorList>
    </citation>
    <scope>NUCLEOTIDE SEQUENCE [LARGE SCALE GENOMIC DNA]</scope>
</reference>
<gene>
    <name type="primary">Ars2</name>
    <name type="ORF">GD10335</name>
</gene>
<proteinExistence type="inferred from homology"/>